<name>PP404_ARATH</name>
<gene>
    <name type="ordered locus">At5g38730</name>
    <name type="ORF">MKD10.5</name>
</gene>
<evidence type="ECO:0000305" key="1"/>
<comment type="similarity">
    <text evidence="1">Belongs to the PPR family. P subfamily.</text>
</comment>
<comment type="online information" name="Pentatricopeptide repeat proteins">
    <link uri="https://ppr.plantenergy.uwa.edu.au"/>
</comment>
<feature type="chain" id="PRO_0000363541" description="Pentatricopeptide repeat-containing protein At5g38730">
    <location>
        <begin position="1"/>
        <end position="596"/>
    </location>
</feature>
<feature type="repeat" description="PPR 1">
    <location>
        <begin position="132"/>
        <end position="166"/>
    </location>
</feature>
<feature type="repeat" description="PPR 2">
    <location>
        <begin position="167"/>
        <end position="201"/>
    </location>
</feature>
<feature type="repeat" description="PPR 3">
    <location>
        <begin position="202"/>
        <end position="236"/>
    </location>
</feature>
<feature type="repeat" description="PPR 4">
    <location>
        <begin position="237"/>
        <end position="271"/>
    </location>
</feature>
<feature type="repeat" description="PPR 5">
    <location>
        <begin position="272"/>
        <end position="302"/>
    </location>
</feature>
<feature type="repeat" description="PPR 6">
    <location>
        <begin position="306"/>
        <end position="340"/>
    </location>
</feature>
<feature type="repeat" description="PPR 7">
    <location>
        <begin position="341"/>
        <end position="375"/>
    </location>
</feature>
<feature type="repeat" description="PPR 8">
    <location>
        <begin position="376"/>
        <end position="410"/>
    </location>
</feature>
<feature type="repeat" description="PPR 9">
    <location>
        <begin position="411"/>
        <end position="445"/>
    </location>
</feature>
<feature type="repeat" description="PPR 10">
    <location>
        <begin position="446"/>
        <end position="480"/>
    </location>
</feature>
<feature type="repeat" description="PPR 11">
    <location>
        <begin position="481"/>
        <end position="515"/>
    </location>
</feature>
<feature type="repeat" description="PPR 12">
    <location>
        <begin position="516"/>
        <end position="550"/>
    </location>
</feature>
<keyword id="KW-1185">Reference proteome</keyword>
<keyword id="KW-0677">Repeat</keyword>
<accession>Q9FKR3</accession>
<organism>
    <name type="scientific">Arabidopsis thaliana</name>
    <name type="common">Mouse-ear cress</name>
    <dbReference type="NCBI Taxonomy" id="3702"/>
    <lineage>
        <taxon>Eukaryota</taxon>
        <taxon>Viridiplantae</taxon>
        <taxon>Streptophyta</taxon>
        <taxon>Embryophyta</taxon>
        <taxon>Tracheophyta</taxon>
        <taxon>Spermatophyta</taxon>
        <taxon>Magnoliopsida</taxon>
        <taxon>eudicotyledons</taxon>
        <taxon>Gunneridae</taxon>
        <taxon>Pentapetalae</taxon>
        <taxon>rosids</taxon>
        <taxon>malvids</taxon>
        <taxon>Brassicales</taxon>
        <taxon>Brassicaceae</taxon>
        <taxon>Camelineae</taxon>
        <taxon>Arabidopsis</taxon>
    </lineage>
</organism>
<dbReference type="EMBL" id="AB011478">
    <property type="protein sequence ID" value="BAB10131.1"/>
    <property type="molecule type" value="Genomic_DNA"/>
</dbReference>
<dbReference type="EMBL" id="CP002688">
    <property type="protein sequence ID" value="AED94354.1"/>
    <property type="molecule type" value="Genomic_DNA"/>
</dbReference>
<dbReference type="RefSeq" id="NP_198689.1">
    <property type="nucleotide sequence ID" value="NM_123234.2"/>
</dbReference>
<dbReference type="SMR" id="Q9FKR3"/>
<dbReference type="FunCoup" id="Q9FKR3">
    <property type="interactions" value="208"/>
</dbReference>
<dbReference type="PaxDb" id="3702-AT5G38730.1"/>
<dbReference type="ProteomicsDB" id="249285"/>
<dbReference type="EnsemblPlants" id="AT5G38730.1">
    <property type="protein sequence ID" value="AT5G38730.1"/>
    <property type="gene ID" value="AT5G38730"/>
</dbReference>
<dbReference type="GeneID" id="833864"/>
<dbReference type="Gramene" id="AT5G38730.1">
    <property type="protein sequence ID" value="AT5G38730.1"/>
    <property type="gene ID" value="AT5G38730"/>
</dbReference>
<dbReference type="KEGG" id="ath:AT5G38730"/>
<dbReference type="Araport" id="AT5G38730"/>
<dbReference type="TAIR" id="AT5G38730"/>
<dbReference type="eggNOG" id="KOG4197">
    <property type="taxonomic scope" value="Eukaryota"/>
</dbReference>
<dbReference type="HOGENOM" id="CLU_002706_49_13_1"/>
<dbReference type="InParanoid" id="Q9FKR3"/>
<dbReference type="OMA" id="KHFKTAH"/>
<dbReference type="PhylomeDB" id="Q9FKR3"/>
<dbReference type="PRO" id="PR:Q9FKR3"/>
<dbReference type="Proteomes" id="UP000006548">
    <property type="component" value="Chromosome 5"/>
</dbReference>
<dbReference type="ExpressionAtlas" id="Q9FKR3">
    <property type="expression patterns" value="baseline and differential"/>
</dbReference>
<dbReference type="Gene3D" id="1.25.40.10">
    <property type="entry name" value="Tetratricopeptide repeat domain"/>
    <property type="match status" value="4"/>
</dbReference>
<dbReference type="InterPro" id="IPR051114">
    <property type="entry name" value="Mito_RNA_Proc_CCM1"/>
</dbReference>
<dbReference type="InterPro" id="IPR002885">
    <property type="entry name" value="Pentatricopeptide_rpt"/>
</dbReference>
<dbReference type="InterPro" id="IPR011990">
    <property type="entry name" value="TPR-like_helical_dom_sf"/>
</dbReference>
<dbReference type="NCBIfam" id="TIGR00756">
    <property type="entry name" value="PPR"/>
    <property type="match status" value="7"/>
</dbReference>
<dbReference type="PANTHER" id="PTHR47934:SF6">
    <property type="entry name" value="MITOCHONDRIAL GROUP I INTRON SPLICING FACTOR CCM1-RELATED"/>
    <property type="match status" value="1"/>
</dbReference>
<dbReference type="PANTHER" id="PTHR47934">
    <property type="entry name" value="PENTATRICOPEPTIDE REPEAT-CONTAINING PROTEIN PET309, MITOCHONDRIAL"/>
    <property type="match status" value="1"/>
</dbReference>
<dbReference type="Pfam" id="PF01535">
    <property type="entry name" value="PPR"/>
    <property type="match status" value="3"/>
</dbReference>
<dbReference type="Pfam" id="PF12854">
    <property type="entry name" value="PPR_1"/>
    <property type="match status" value="2"/>
</dbReference>
<dbReference type="Pfam" id="PF13041">
    <property type="entry name" value="PPR_2"/>
    <property type="match status" value="2"/>
</dbReference>
<dbReference type="Pfam" id="PF13812">
    <property type="entry name" value="PPR_3"/>
    <property type="match status" value="1"/>
</dbReference>
<dbReference type="PROSITE" id="PS51375">
    <property type="entry name" value="PPR"/>
    <property type="match status" value="13"/>
</dbReference>
<sequence>MVNLLSANREALIAQSICATVLKGNWKNILKHKVDSGLLKSAITTQVISELSLFSGYGGPSLSWSFFIWTDSLPSSKHSLQSSWKMILILTKHKHFKTAHQLLDKLAQRELLSSPLVLRSLVGGVSEDPEDVSHVFSWLMIYYAKAGMINDSIVVFEQIRSCGLKPHLQACTVLLNSLVKQRLTDTVWKIFKKMVKLGVVANIHVYNVLVHACSKSGDPEKAEKLLSEMEEKGVFPDIFTYNTLISVYCKKSMHFEALSVQDRMERSGVAPNIVTYNSFIHGFSREGRMREATRLFREIKDDVTANHVTYTTLIDGYCRMNDIDEALRLREVMESRGFSPGVVTYNSILRKLCEDGRIREANRLLTEMSGKKIEPDNITCNTLINAYCKIEDMVSAVKVKKKMIESGLKLDMYSYKALIHGFCKVLELENAKEELFSMIEKGFSPGYATYSWLVDGFYNQNKQDEITKLLEEFEKRGLCADVALYRGLIRRICKLEQVDYAKVLFESMEKKGLVGDSVIFTTMAYAYWRTGKVTEASALFDVMYNRRLMVNLKLYKSISASYAGDNDVLRFFWSHVGDRCLISKSILREMNRSEVL</sequence>
<protein>
    <recommendedName>
        <fullName>Pentatricopeptide repeat-containing protein At5g38730</fullName>
    </recommendedName>
</protein>
<proteinExistence type="evidence at transcript level"/>
<reference key="1">
    <citation type="journal article" date="1998" name="DNA Res.">
        <title>Structural analysis of Arabidopsis thaliana chromosome 5. V. Sequence features of the regions of 1,381,565 bp covered by twenty one physically assigned P1 and TAC clones.</title>
        <authorList>
            <person name="Kaneko T."/>
            <person name="Kotani H."/>
            <person name="Nakamura Y."/>
            <person name="Sato S."/>
            <person name="Asamizu E."/>
            <person name="Miyajima N."/>
            <person name="Tabata S."/>
        </authorList>
    </citation>
    <scope>NUCLEOTIDE SEQUENCE [LARGE SCALE GENOMIC DNA]</scope>
    <source>
        <strain>cv. Columbia</strain>
    </source>
</reference>
<reference key="2">
    <citation type="journal article" date="2017" name="Plant J.">
        <title>Araport11: a complete reannotation of the Arabidopsis thaliana reference genome.</title>
        <authorList>
            <person name="Cheng C.Y."/>
            <person name="Krishnakumar V."/>
            <person name="Chan A.P."/>
            <person name="Thibaud-Nissen F."/>
            <person name="Schobel S."/>
            <person name="Town C.D."/>
        </authorList>
    </citation>
    <scope>GENOME REANNOTATION</scope>
    <source>
        <strain>cv. Columbia</strain>
    </source>
</reference>
<reference key="3">
    <citation type="journal article" date="2004" name="Plant Cell">
        <title>Genome-wide analysis of Arabidopsis pentatricopeptide repeat proteins reveals their essential role in organelle biogenesis.</title>
        <authorList>
            <person name="Lurin C."/>
            <person name="Andres C."/>
            <person name="Aubourg S."/>
            <person name="Bellaoui M."/>
            <person name="Bitton F."/>
            <person name="Bruyere C."/>
            <person name="Caboche M."/>
            <person name="Debast C."/>
            <person name="Gualberto J."/>
            <person name="Hoffmann B."/>
            <person name="Lecharny A."/>
            <person name="Le Ret M."/>
            <person name="Martin-Magniette M.-L."/>
            <person name="Mireau H."/>
            <person name="Peeters N."/>
            <person name="Renou J.-P."/>
            <person name="Szurek B."/>
            <person name="Taconnat L."/>
            <person name="Small I."/>
        </authorList>
    </citation>
    <scope>GENE FAMILY</scope>
</reference>